<reference key="1">
    <citation type="journal article" date="2005" name="Science">
        <title>The transcriptional landscape of the mammalian genome.</title>
        <authorList>
            <person name="Carninci P."/>
            <person name="Kasukawa T."/>
            <person name="Katayama S."/>
            <person name="Gough J."/>
            <person name="Frith M.C."/>
            <person name="Maeda N."/>
            <person name="Oyama R."/>
            <person name="Ravasi T."/>
            <person name="Lenhard B."/>
            <person name="Wells C."/>
            <person name="Kodzius R."/>
            <person name="Shimokawa K."/>
            <person name="Bajic V.B."/>
            <person name="Brenner S.E."/>
            <person name="Batalov S."/>
            <person name="Forrest A.R."/>
            <person name="Zavolan M."/>
            <person name="Davis M.J."/>
            <person name="Wilming L.G."/>
            <person name="Aidinis V."/>
            <person name="Allen J.E."/>
            <person name="Ambesi-Impiombato A."/>
            <person name="Apweiler R."/>
            <person name="Aturaliya R.N."/>
            <person name="Bailey T.L."/>
            <person name="Bansal M."/>
            <person name="Baxter L."/>
            <person name="Beisel K.W."/>
            <person name="Bersano T."/>
            <person name="Bono H."/>
            <person name="Chalk A.M."/>
            <person name="Chiu K.P."/>
            <person name="Choudhary V."/>
            <person name="Christoffels A."/>
            <person name="Clutterbuck D.R."/>
            <person name="Crowe M.L."/>
            <person name="Dalla E."/>
            <person name="Dalrymple B.P."/>
            <person name="de Bono B."/>
            <person name="Della Gatta G."/>
            <person name="di Bernardo D."/>
            <person name="Down T."/>
            <person name="Engstrom P."/>
            <person name="Fagiolini M."/>
            <person name="Faulkner G."/>
            <person name="Fletcher C.F."/>
            <person name="Fukushima T."/>
            <person name="Furuno M."/>
            <person name="Futaki S."/>
            <person name="Gariboldi M."/>
            <person name="Georgii-Hemming P."/>
            <person name="Gingeras T.R."/>
            <person name="Gojobori T."/>
            <person name="Green R.E."/>
            <person name="Gustincich S."/>
            <person name="Harbers M."/>
            <person name="Hayashi Y."/>
            <person name="Hensch T.K."/>
            <person name="Hirokawa N."/>
            <person name="Hill D."/>
            <person name="Huminiecki L."/>
            <person name="Iacono M."/>
            <person name="Ikeo K."/>
            <person name="Iwama A."/>
            <person name="Ishikawa T."/>
            <person name="Jakt M."/>
            <person name="Kanapin A."/>
            <person name="Katoh M."/>
            <person name="Kawasawa Y."/>
            <person name="Kelso J."/>
            <person name="Kitamura H."/>
            <person name="Kitano H."/>
            <person name="Kollias G."/>
            <person name="Krishnan S.P."/>
            <person name="Kruger A."/>
            <person name="Kummerfeld S.K."/>
            <person name="Kurochkin I.V."/>
            <person name="Lareau L.F."/>
            <person name="Lazarevic D."/>
            <person name="Lipovich L."/>
            <person name="Liu J."/>
            <person name="Liuni S."/>
            <person name="McWilliam S."/>
            <person name="Madan Babu M."/>
            <person name="Madera M."/>
            <person name="Marchionni L."/>
            <person name="Matsuda H."/>
            <person name="Matsuzawa S."/>
            <person name="Miki H."/>
            <person name="Mignone F."/>
            <person name="Miyake S."/>
            <person name="Morris K."/>
            <person name="Mottagui-Tabar S."/>
            <person name="Mulder N."/>
            <person name="Nakano N."/>
            <person name="Nakauchi H."/>
            <person name="Ng P."/>
            <person name="Nilsson R."/>
            <person name="Nishiguchi S."/>
            <person name="Nishikawa S."/>
            <person name="Nori F."/>
            <person name="Ohara O."/>
            <person name="Okazaki Y."/>
            <person name="Orlando V."/>
            <person name="Pang K.C."/>
            <person name="Pavan W.J."/>
            <person name="Pavesi G."/>
            <person name="Pesole G."/>
            <person name="Petrovsky N."/>
            <person name="Piazza S."/>
            <person name="Reed J."/>
            <person name="Reid J.F."/>
            <person name="Ring B.Z."/>
            <person name="Ringwald M."/>
            <person name="Rost B."/>
            <person name="Ruan Y."/>
            <person name="Salzberg S.L."/>
            <person name="Sandelin A."/>
            <person name="Schneider C."/>
            <person name="Schoenbach C."/>
            <person name="Sekiguchi K."/>
            <person name="Semple C.A."/>
            <person name="Seno S."/>
            <person name="Sessa L."/>
            <person name="Sheng Y."/>
            <person name="Shibata Y."/>
            <person name="Shimada H."/>
            <person name="Shimada K."/>
            <person name="Silva D."/>
            <person name="Sinclair B."/>
            <person name="Sperling S."/>
            <person name="Stupka E."/>
            <person name="Sugiura K."/>
            <person name="Sultana R."/>
            <person name="Takenaka Y."/>
            <person name="Taki K."/>
            <person name="Tammoja K."/>
            <person name="Tan S.L."/>
            <person name="Tang S."/>
            <person name="Taylor M.S."/>
            <person name="Tegner J."/>
            <person name="Teichmann S.A."/>
            <person name="Ueda H.R."/>
            <person name="van Nimwegen E."/>
            <person name="Verardo R."/>
            <person name="Wei C.L."/>
            <person name="Yagi K."/>
            <person name="Yamanishi H."/>
            <person name="Zabarovsky E."/>
            <person name="Zhu S."/>
            <person name="Zimmer A."/>
            <person name="Hide W."/>
            <person name="Bult C."/>
            <person name="Grimmond S.M."/>
            <person name="Teasdale R.D."/>
            <person name="Liu E.T."/>
            <person name="Brusic V."/>
            <person name="Quackenbush J."/>
            <person name="Wahlestedt C."/>
            <person name="Mattick J.S."/>
            <person name="Hume D.A."/>
            <person name="Kai C."/>
            <person name="Sasaki D."/>
            <person name="Tomaru Y."/>
            <person name="Fukuda S."/>
            <person name="Kanamori-Katayama M."/>
            <person name="Suzuki M."/>
            <person name="Aoki J."/>
            <person name="Arakawa T."/>
            <person name="Iida J."/>
            <person name="Imamura K."/>
            <person name="Itoh M."/>
            <person name="Kato T."/>
            <person name="Kawaji H."/>
            <person name="Kawagashira N."/>
            <person name="Kawashima T."/>
            <person name="Kojima M."/>
            <person name="Kondo S."/>
            <person name="Konno H."/>
            <person name="Nakano K."/>
            <person name="Ninomiya N."/>
            <person name="Nishio T."/>
            <person name="Okada M."/>
            <person name="Plessy C."/>
            <person name="Shibata K."/>
            <person name="Shiraki T."/>
            <person name="Suzuki S."/>
            <person name="Tagami M."/>
            <person name="Waki K."/>
            <person name="Watahiki A."/>
            <person name="Okamura-Oho Y."/>
            <person name="Suzuki H."/>
            <person name="Kawai J."/>
            <person name="Hayashizaki Y."/>
        </authorList>
    </citation>
    <scope>NUCLEOTIDE SEQUENCE [LARGE SCALE MRNA] (ISOFORMS 1 AND 2)</scope>
    <source>
        <strain>C57BL/6J</strain>
        <strain>NOD</strain>
        <tissue>Bone</tissue>
    </source>
</reference>
<reference key="2">
    <citation type="journal article" date="2004" name="Genome Res.">
        <title>The status, quality, and expansion of the NIH full-length cDNA project: the Mammalian Gene Collection (MGC).</title>
        <authorList>
            <consortium name="The MGC Project Team"/>
        </authorList>
    </citation>
    <scope>NUCLEOTIDE SEQUENCE [LARGE SCALE MRNA] (ISOFORMS 1 AND 3)</scope>
    <source>
        <strain>Czech II</strain>
        <strain>FVB/N</strain>
        <tissue>Mammary tumor</tissue>
    </source>
</reference>
<reference key="3">
    <citation type="journal article" date="2010" name="Cell">
        <title>A tissue-specific atlas of mouse protein phosphorylation and expression.</title>
        <authorList>
            <person name="Huttlin E.L."/>
            <person name="Jedrychowski M.P."/>
            <person name="Elias J.E."/>
            <person name="Goswami T."/>
            <person name="Rad R."/>
            <person name="Beausoleil S.A."/>
            <person name="Villen J."/>
            <person name="Haas W."/>
            <person name="Sowa M.E."/>
            <person name="Gygi S.P."/>
        </authorList>
    </citation>
    <scope>IDENTIFICATION BY MASS SPECTROMETRY [LARGE SCALE ANALYSIS]</scope>
    <source>
        <tissue>Brain</tissue>
        <tissue>Liver</tissue>
        <tissue>Spleen</tissue>
        <tissue>Testis</tissue>
    </source>
</reference>
<feature type="chain" id="PRO_0000287199" description="Vacuolar protein sorting-associated protein 37A">
    <location>
        <begin position="1"/>
        <end position="397"/>
    </location>
</feature>
<feature type="domain" description="VPS37 C-terminal" evidence="3">
    <location>
        <begin position="308"/>
        <end position="397"/>
    </location>
</feature>
<feature type="modified residue" description="Phosphoserine" evidence="2">
    <location>
        <position position="18"/>
    </location>
</feature>
<feature type="splice variant" id="VSP_025370" description="In isoform 2." evidence="5">
    <original>SCSASALQARLKVAAHEAEEESD</original>
    <variation>VGLMSSVCPQELLSHRSCPALCI</variation>
    <location>
        <begin position="324"/>
        <end position="346"/>
    </location>
</feature>
<feature type="splice variant" id="VSP_025371" description="In isoform 2." evidence="5">
    <location>
        <begin position="347"/>
        <end position="397"/>
    </location>
</feature>
<feature type="splice variant" id="VSP_025372" description="In isoform 3." evidence="4">
    <original>ICHCRRAKEEKLHQVIAMHSQFHAPL</original>
    <variation>VCNTLQLRISDNIITIFLSMFISKHR</variation>
    <location>
        <begin position="372"/>
        <end position="397"/>
    </location>
</feature>
<feature type="sequence conflict" description="In Ref. 1; BAE42131." evidence="6" ref="1">
    <original>S</original>
    <variation>P</variation>
    <location>
        <position position="14"/>
    </location>
</feature>
<feature type="sequence conflict" description="In Ref. 1; BAE42324." evidence="6" ref="1">
    <original>L</original>
    <variation>P</variation>
    <location>
        <position position="119"/>
    </location>
</feature>
<feature type="sequence conflict" description="In Ref. 1; BAE42324." evidence="6" ref="1">
    <original>A</original>
    <variation>E</variation>
    <location>
        <position position="193"/>
    </location>
</feature>
<feature type="sequence conflict" description="In Ref. 1; BAE42324." evidence="6" ref="1">
    <original>P</original>
    <variation>L</variation>
    <location>
        <position position="203"/>
    </location>
</feature>
<comment type="function">
    <text evidence="1">Component of the ESCRT-I complex, a regulator of vesicular trafficking process. Required for the sorting of endocytic ubiquitinated cargos into multivesicular bodies. May be involved in cell growth and differentiation (By similarity).</text>
</comment>
<comment type="subunit">
    <text evidence="1">Component of the ESCRT-I complex (endosomal sorting complex required for transport I) which consists of TSG101, VPS28, a VPS37 protein (VPS37A to -D) and MVB12A or MVB12B in a 1:1:1:1 stoichiometry. Interacts with TSG101, VPS28 and HGS. Component of an ESCRT-I complex (endosomal sorting complex required for transport I) which consists of TSG101, VPS28, VPS37A and UBAP1 in a 1:1:1:1 stoichiometry (By similarity).</text>
</comment>
<comment type="subcellular location">
    <subcellularLocation>
        <location evidence="1">Late endosome membrane</location>
        <topology evidence="1">Peripheral membrane protein</topology>
    </subcellularLocation>
    <subcellularLocation>
        <location evidence="1">Nucleus</location>
    </subcellularLocation>
</comment>
<comment type="alternative products">
    <event type="alternative splicing"/>
    <isoform>
        <id>Q8CHS8-1</id>
        <name>1</name>
        <sequence type="displayed"/>
    </isoform>
    <isoform>
        <id>Q8CHS8-2</id>
        <name>2</name>
        <sequence type="described" ref="VSP_025370 VSP_025371"/>
    </isoform>
    <isoform>
        <id>Q8CHS8-3</id>
        <name>3</name>
        <sequence type="described" ref="VSP_025372"/>
    </isoform>
</comment>
<comment type="similarity">
    <text evidence="6">Belongs to the VPS37 family.</text>
</comment>
<proteinExistence type="evidence at protein level"/>
<accession>Q8CHS8</accession>
<accession>Q0VGD1</accession>
<accession>Q3TBI5</accession>
<accession>Q3TC15</accession>
<accession>Q3TC26</accession>
<organism>
    <name type="scientific">Mus musculus</name>
    <name type="common">Mouse</name>
    <dbReference type="NCBI Taxonomy" id="10090"/>
    <lineage>
        <taxon>Eukaryota</taxon>
        <taxon>Metazoa</taxon>
        <taxon>Chordata</taxon>
        <taxon>Craniata</taxon>
        <taxon>Vertebrata</taxon>
        <taxon>Euteleostomi</taxon>
        <taxon>Mammalia</taxon>
        <taxon>Eutheria</taxon>
        <taxon>Euarchontoglires</taxon>
        <taxon>Glires</taxon>
        <taxon>Rodentia</taxon>
        <taxon>Myomorpha</taxon>
        <taxon>Muroidea</taxon>
        <taxon>Muridae</taxon>
        <taxon>Murinae</taxon>
        <taxon>Mus</taxon>
        <taxon>Mus</taxon>
    </lineage>
</organism>
<sequence length="397" mass="44419">MSWLFPLAKSASSSAAGSPAGLTSLQQQKQRLIESLRNSHSSIAEIQKDVEYRLPFTVNNLTININILLPPQFPQEKPVISVYPPIRHHLMDSQGLYVTSPLVSNFTMHSDLGKIIQSLLDEFWKNPPVLAPTSTTFPYLYSNPGGMPPYPSQGFPFLPPYPPPEANRNITSLSVADTVSSSTTSYTAAKPVAPSFGILSSLPLPVPTTESSASVNQNGFGYKMPDIPDAFPELSELSVSQLTDMNEQEEVLLEQFLMLPQLKQIITDKEDLVKNIEELARKNLLLEHSLEGKRQTVLDKYELLLQMKSTFEKKMQRQHELSESCSASALQARLKVAAHEAEEESDNIAEDFLEGKTEIDDFLNSFKEKRTICHCRRAKEEKLHQVIAMHSQFHAPL</sequence>
<gene>
    <name type="primary">Vps37a</name>
</gene>
<dbReference type="EMBL" id="AK170943">
    <property type="protein sequence ID" value="BAE42131.1"/>
    <property type="molecule type" value="mRNA"/>
</dbReference>
<dbReference type="EMBL" id="AK170961">
    <property type="protein sequence ID" value="BAE42142.1"/>
    <property type="molecule type" value="mRNA"/>
</dbReference>
<dbReference type="EMBL" id="AK171055">
    <property type="protein sequence ID" value="BAE42215.1"/>
    <property type="molecule type" value="mRNA"/>
</dbReference>
<dbReference type="EMBL" id="AK171221">
    <property type="protein sequence ID" value="BAE42324.1"/>
    <property type="molecule type" value="mRNA"/>
</dbReference>
<dbReference type="EMBL" id="BC039290">
    <property type="protein sequence ID" value="AAH39290.1"/>
    <property type="molecule type" value="mRNA"/>
</dbReference>
<dbReference type="EMBL" id="BC110396">
    <property type="protein sequence ID" value="AAI10397.1"/>
    <property type="molecule type" value="mRNA"/>
</dbReference>
<dbReference type="CCDS" id="CCDS22254.1">
    <molecule id="Q8CHS8-1"/>
</dbReference>
<dbReference type="RefSeq" id="NP_291038.2">
    <molecule id="Q8CHS8-1"/>
    <property type="nucleotide sequence ID" value="NM_033560.3"/>
</dbReference>
<dbReference type="SMR" id="Q8CHS8"/>
<dbReference type="BioGRID" id="206532">
    <property type="interactions" value="2"/>
</dbReference>
<dbReference type="FunCoup" id="Q8CHS8">
    <property type="interactions" value="3214"/>
</dbReference>
<dbReference type="STRING" id="10090.ENSMUSP00000096415"/>
<dbReference type="GlyGen" id="Q8CHS8">
    <property type="glycosylation" value="6 sites, 1 N-linked glycan (1 site), 1 O-linked glycan (5 sites)"/>
</dbReference>
<dbReference type="iPTMnet" id="Q8CHS8"/>
<dbReference type="PhosphoSitePlus" id="Q8CHS8"/>
<dbReference type="SwissPalm" id="Q8CHS8"/>
<dbReference type="PaxDb" id="10090-ENSMUSP00000096415"/>
<dbReference type="PeptideAtlas" id="Q8CHS8"/>
<dbReference type="ProteomicsDB" id="297926">
    <molecule id="Q8CHS8-1"/>
</dbReference>
<dbReference type="ProteomicsDB" id="297927">
    <molecule id="Q8CHS8-2"/>
</dbReference>
<dbReference type="ProteomicsDB" id="297928">
    <molecule id="Q8CHS8-3"/>
</dbReference>
<dbReference type="Pumba" id="Q8CHS8"/>
<dbReference type="Antibodypedia" id="22259">
    <property type="antibodies" value="151 antibodies from 24 providers"/>
</dbReference>
<dbReference type="DNASU" id="52348"/>
<dbReference type="Ensembl" id="ENSMUST00000098817.4">
    <molecule id="Q8CHS8-1"/>
    <property type="protein sequence ID" value="ENSMUSP00000096415.3"/>
    <property type="gene ID" value="ENSMUSG00000031600.12"/>
</dbReference>
<dbReference type="Ensembl" id="ENSMUST00000238339.2">
    <molecule id="Q8CHS8-3"/>
    <property type="protein sequence ID" value="ENSMUSP00000158798.2"/>
    <property type="gene ID" value="ENSMUSG00000031600.12"/>
</dbReference>
<dbReference type="GeneID" id="52348"/>
<dbReference type="KEGG" id="mmu:52348"/>
<dbReference type="UCSC" id="uc009lmv.1">
    <molecule id="Q8CHS8-1"/>
    <property type="organism name" value="mouse"/>
</dbReference>
<dbReference type="UCSC" id="uc009lmx.1">
    <molecule id="Q8CHS8-3"/>
    <property type="organism name" value="mouse"/>
</dbReference>
<dbReference type="AGR" id="MGI:1261835"/>
<dbReference type="CTD" id="137492"/>
<dbReference type="MGI" id="MGI:1261835">
    <property type="gene designation" value="Vps37a"/>
</dbReference>
<dbReference type="VEuPathDB" id="HostDB:ENSMUSG00000031600"/>
<dbReference type="eggNOG" id="KOG3270">
    <property type="taxonomic scope" value="Eukaryota"/>
</dbReference>
<dbReference type="GeneTree" id="ENSGT00950000183012"/>
<dbReference type="HOGENOM" id="CLU_062319_0_0_1"/>
<dbReference type="InParanoid" id="Q8CHS8"/>
<dbReference type="OMA" id="HPWCNEH"/>
<dbReference type="OrthoDB" id="10260857at2759"/>
<dbReference type="PhylomeDB" id="Q8CHS8"/>
<dbReference type="TreeFam" id="TF332146"/>
<dbReference type="Reactome" id="R-MMU-917729">
    <property type="pathway name" value="Endosomal Sorting Complex Required For Transport (ESCRT)"/>
</dbReference>
<dbReference type="BioGRID-ORCS" id="52348">
    <property type="hits" value="17 hits in 78 CRISPR screens"/>
</dbReference>
<dbReference type="ChiTaRS" id="Vps37a">
    <property type="organism name" value="mouse"/>
</dbReference>
<dbReference type="PRO" id="PR:Q8CHS8"/>
<dbReference type="Proteomes" id="UP000000589">
    <property type="component" value="Chromosome 8"/>
</dbReference>
<dbReference type="RNAct" id="Q8CHS8">
    <property type="molecule type" value="protein"/>
</dbReference>
<dbReference type="Bgee" id="ENSMUSG00000031600">
    <property type="expression patterns" value="Expressed in hindlimb stylopod muscle and 256 other cell types or tissues"/>
</dbReference>
<dbReference type="GO" id="GO:0005813">
    <property type="term" value="C:centrosome"/>
    <property type="evidence" value="ECO:0007669"/>
    <property type="project" value="Ensembl"/>
</dbReference>
<dbReference type="GO" id="GO:0005829">
    <property type="term" value="C:cytosol"/>
    <property type="evidence" value="ECO:0007669"/>
    <property type="project" value="Ensembl"/>
</dbReference>
<dbReference type="GO" id="GO:0000813">
    <property type="term" value="C:ESCRT I complex"/>
    <property type="evidence" value="ECO:0000250"/>
    <property type="project" value="UniProtKB"/>
</dbReference>
<dbReference type="GO" id="GO:0031902">
    <property type="term" value="C:late endosome membrane"/>
    <property type="evidence" value="ECO:0007669"/>
    <property type="project" value="UniProtKB-SubCell"/>
</dbReference>
<dbReference type="GO" id="GO:0005654">
    <property type="term" value="C:nucleoplasm"/>
    <property type="evidence" value="ECO:0007669"/>
    <property type="project" value="Ensembl"/>
</dbReference>
<dbReference type="GO" id="GO:0015031">
    <property type="term" value="P:protein transport"/>
    <property type="evidence" value="ECO:0007669"/>
    <property type="project" value="UniProtKB-KW"/>
</dbReference>
<dbReference type="GO" id="GO:0043162">
    <property type="term" value="P:ubiquitin-dependent protein catabolic process via the multivesicular body sorting pathway"/>
    <property type="evidence" value="ECO:0000250"/>
    <property type="project" value="UniProtKB"/>
</dbReference>
<dbReference type="CDD" id="cd11685">
    <property type="entry name" value="UEV_TSG101-like"/>
    <property type="match status" value="1"/>
</dbReference>
<dbReference type="FunFam" id="1.10.287.660:FF:000002">
    <property type="entry name" value="Vacuolar protein sorting-associated protein 37A"/>
    <property type="match status" value="1"/>
</dbReference>
<dbReference type="FunFam" id="3.10.110.10:FF:000069">
    <property type="entry name" value="vacuolar protein sorting-associated protein 37A"/>
    <property type="match status" value="1"/>
</dbReference>
<dbReference type="Gene3D" id="1.10.287.660">
    <property type="entry name" value="Helix hairpin bin"/>
    <property type="match status" value="1"/>
</dbReference>
<dbReference type="Gene3D" id="3.10.110.10">
    <property type="entry name" value="Ubiquitin Conjugating Enzyme"/>
    <property type="match status" value="1"/>
</dbReference>
<dbReference type="InterPro" id="IPR037202">
    <property type="entry name" value="ESCRT_assembly_dom"/>
</dbReference>
<dbReference type="InterPro" id="IPR029012">
    <property type="entry name" value="Helix_hairpin_bin_sf"/>
</dbReference>
<dbReference type="InterPro" id="IPR009851">
    <property type="entry name" value="Mod_r"/>
</dbReference>
<dbReference type="InterPro" id="IPR016135">
    <property type="entry name" value="UBQ-conjugating_enzyme/RWD"/>
</dbReference>
<dbReference type="PANTHER" id="PTHR13678">
    <property type="entry name" value="VACUOLAR PROTEIN SORTING-ASSOCIATED PROTEIN 37"/>
    <property type="match status" value="1"/>
</dbReference>
<dbReference type="PANTHER" id="PTHR13678:SF2">
    <property type="entry name" value="VACUOLAR PROTEIN SORTING-ASSOCIATED PROTEIN 37A"/>
    <property type="match status" value="1"/>
</dbReference>
<dbReference type="Pfam" id="PF07200">
    <property type="entry name" value="Mod_r"/>
    <property type="match status" value="1"/>
</dbReference>
<dbReference type="SUPFAM" id="SSF140111">
    <property type="entry name" value="Endosomal sorting complex assembly domain"/>
    <property type="match status" value="1"/>
</dbReference>
<dbReference type="SUPFAM" id="SSF54495">
    <property type="entry name" value="UBC-like"/>
    <property type="match status" value="1"/>
</dbReference>
<dbReference type="PROSITE" id="PS51314">
    <property type="entry name" value="VPS37_C"/>
    <property type="match status" value="1"/>
</dbReference>
<name>VP37A_MOUSE</name>
<keyword id="KW-0025">Alternative splicing</keyword>
<keyword id="KW-0967">Endosome</keyword>
<keyword id="KW-0472">Membrane</keyword>
<keyword id="KW-0539">Nucleus</keyword>
<keyword id="KW-0597">Phosphoprotein</keyword>
<keyword id="KW-0653">Protein transport</keyword>
<keyword id="KW-1185">Reference proteome</keyword>
<keyword id="KW-0813">Transport</keyword>
<protein>
    <recommendedName>
        <fullName>Vacuolar protein sorting-associated protein 37A</fullName>
        <shortName>Vps37A</shortName>
    </recommendedName>
    <alternativeName>
        <fullName>ESCRT-I complex subunit VPS37A</fullName>
    </alternativeName>
</protein>
<evidence type="ECO:0000250" key="1"/>
<evidence type="ECO:0000250" key="2">
    <source>
        <dbReference type="UniProtKB" id="Q8NEZ2"/>
    </source>
</evidence>
<evidence type="ECO:0000255" key="3">
    <source>
        <dbReference type="PROSITE-ProRule" id="PRU00646"/>
    </source>
</evidence>
<evidence type="ECO:0000303" key="4">
    <source>
    </source>
</evidence>
<evidence type="ECO:0000303" key="5">
    <source>
    </source>
</evidence>
<evidence type="ECO:0000305" key="6"/>